<proteinExistence type="evidence at transcript level"/>
<name>HSP1_SMIMU</name>
<protein>
    <recommendedName>
        <fullName>Sperm protamine P1</fullName>
    </recommendedName>
</protein>
<sequence>MARYRRHSRSRSRSRYRRRRRRRSRHHNRRRTYRRSRRHSRRRRGRRRGYSRRRYSRRGRRRY</sequence>
<dbReference type="EMBL" id="AF001585">
    <property type="protein sequence ID" value="AAB91375.1"/>
    <property type="molecule type" value="Genomic_DNA"/>
</dbReference>
<dbReference type="GO" id="GO:0000786">
    <property type="term" value="C:nucleosome"/>
    <property type="evidence" value="ECO:0007669"/>
    <property type="project" value="UniProtKB-KW"/>
</dbReference>
<dbReference type="GO" id="GO:0005634">
    <property type="term" value="C:nucleus"/>
    <property type="evidence" value="ECO:0007669"/>
    <property type="project" value="UniProtKB-SubCell"/>
</dbReference>
<dbReference type="GO" id="GO:0003677">
    <property type="term" value="F:DNA binding"/>
    <property type="evidence" value="ECO:0007669"/>
    <property type="project" value="UniProtKB-KW"/>
</dbReference>
<dbReference type="GO" id="GO:0030261">
    <property type="term" value="P:chromosome condensation"/>
    <property type="evidence" value="ECO:0007669"/>
    <property type="project" value="UniProtKB-KW"/>
</dbReference>
<dbReference type="GO" id="GO:0035092">
    <property type="term" value="P:sperm DNA condensation"/>
    <property type="evidence" value="ECO:0007669"/>
    <property type="project" value="InterPro"/>
</dbReference>
<dbReference type="InterPro" id="IPR000221">
    <property type="entry name" value="Protamine_P1"/>
</dbReference>
<dbReference type="PROSITE" id="PS00048">
    <property type="entry name" value="PROTAMINE_P1"/>
    <property type="match status" value="1"/>
</dbReference>
<gene>
    <name type="primary">PRM1</name>
</gene>
<keyword id="KW-0158">Chromosome</keyword>
<keyword id="KW-0217">Developmental protein</keyword>
<keyword id="KW-0221">Differentiation</keyword>
<keyword id="KW-0226">DNA condensation</keyword>
<keyword id="KW-0238">DNA-binding</keyword>
<keyword id="KW-0544">Nucleosome core</keyword>
<keyword id="KW-0539">Nucleus</keyword>
<keyword id="KW-0744">Spermatogenesis</keyword>
<accession>Q71VP9</accession>
<evidence type="ECO:0000250" key="1"/>
<evidence type="ECO:0000256" key="2">
    <source>
        <dbReference type="SAM" id="MobiDB-lite"/>
    </source>
</evidence>
<evidence type="ECO:0000305" key="3"/>
<comment type="function">
    <text evidence="1">Protamines substitute for histones in the chromatin of sperm during the haploid phase of spermatogenesis. They compact sperm DNA into a highly condensed, stable and inactive complex (By similarity).</text>
</comment>
<comment type="subcellular location">
    <subcellularLocation>
        <location evidence="1">Nucleus</location>
    </subcellularLocation>
    <subcellularLocation>
        <location evidence="1">Chromosome</location>
    </subcellularLocation>
</comment>
<comment type="tissue specificity">
    <text>Testis.</text>
</comment>
<comment type="similarity">
    <text evidence="3">Belongs to the protamine P1 family.</text>
</comment>
<feature type="chain" id="PRO_0000191571" description="Sperm protamine P1">
    <location>
        <begin position="1"/>
        <end position="63"/>
    </location>
</feature>
<feature type="region of interest" description="Disordered" evidence="2">
    <location>
        <begin position="1"/>
        <end position="63"/>
    </location>
</feature>
<reference key="1">
    <citation type="journal article" date="1997" name="Mol. Phylogenet. Evol.">
        <title>A multigene assessment of phylogenetic relationships within the dasyurid marsupial subfamily Sminthopsinae.</title>
        <authorList>
            <person name="Krajewski C."/>
            <person name="Blacket M."/>
            <person name="Buckley L."/>
            <person name="Westerman M."/>
        </authorList>
    </citation>
    <scope>NUCLEOTIDE SEQUENCE [GENOMIC DNA]</scope>
</reference>
<organism>
    <name type="scientific">Sminthopsis murina</name>
    <name type="common">Slender-tailed dunnart</name>
    <name type="synonym">Narrow-footed marsupial mouse</name>
    <dbReference type="NCBI Taxonomy" id="32560"/>
    <lineage>
        <taxon>Eukaryota</taxon>
        <taxon>Metazoa</taxon>
        <taxon>Chordata</taxon>
        <taxon>Craniata</taxon>
        <taxon>Vertebrata</taxon>
        <taxon>Euteleostomi</taxon>
        <taxon>Mammalia</taxon>
        <taxon>Metatheria</taxon>
        <taxon>Dasyuromorphia</taxon>
        <taxon>Dasyuridae</taxon>
        <taxon>Sminthopsis</taxon>
    </lineage>
</organism>